<sequence length="367" mass="41270">MSGSSFLFLKSIKCILSSSCHGQNTISNTQLAAQYISKPQKQLCETVLKYFDRQYSEELGEQWWNARDVLLNPLSWQYGVLLNRFSDLTNLKQCLAELGYTNLLQQTHPESHSQTADIPLQCFIHPDPVRIPTQSHHTGWLKQYYLLNAASLLPVLALNVQEGENVLDLCAAPGGKSLAILQTATPGLLHCNEVDQHRHDWLLKTLESYVPPSLRHLLSVTLQDGRSIGTMQPGAYDKVLVDAPCSNDRSWLYTPDTHRGEMWLKERTQLPLLQKELLCSALAAVRPGGIVVYSTCTMSRAENQSVVEEVLASYPGVELQELEQQFIDSLSDHFCFAHLHPSVGQLVIPQKGKTWGPMYVSQLKKIY</sequence>
<comment type="function">
    <text evidence="1">Mitochondrial tRNA methyltransferase that mediates methylation of cytosine to 5-methylcytosine (m5C) at position 34 of mt-tRNA(Met). mt-tRNA(Met) methylation at cytosine(34) takes place at the wobble position of the anticodon and initiates the formation of 5-formylcytosine (f(5)c) at this position. mt-tRNA(Met) containing the f(5)c modification at the wobble position enables recognition of the AUA codon in addition to the AUG codon, expanding codon recognition in mitochondrial translation.</text>
</comment>
<comment type="catalytic activity">
    <reaction evidence="1">
        <text>cytidine(34) in mitochondrial tRNA + S-adenosyl-L-methionine = 5-methylcytidine(34) in mitochondrial tRNA + S-adenosyl-L-homocysteine + H(+)</text>
        <dbReference type="Rhea" id="RHEA:53076"/>
        <dbReference type="Rhea" id="RHEA-COMP:13451"/>
        <dbReference type="Rhea" id="RHEA-COMP:13453"/>
        <dbReference type="ChEBI" id="CHEBI:15378"/>
        <dbReference type="ChEBI" id="CHEBI:57856"/>
        <dbReference type="ChEBI" id="CHEBI:59789"/>
        <dbReference type="ChEBI" id="CHEBI:74483"/>
        <dbReference type="ChEBI" id="CHEBI:82748"/>
    </reaction>
    <physiologicalReaction direction="left-to-right" evidence="1">
        <dbReference type="Rhea" id="RHEA:53077"/>
    </physiologicalReaction>
</comment>
<comment type="subcellular location">
    <subcellularLocation>
        <location evidence="1">Mitochondrion matrix</location>
    </subcellularLocation>
</comment>
<comment type="similarity">
    <text evidence="2">Belongs to the class I-like SAM-binding methyltransferase superfamily. RsmB/NOP family.</text>
</comment>
<comment type="sequence caution" evidence="4">
    <conflict type="erroneous initiation">
        <sequence resource="EMBL-CDS" id="AAH76487"/>
    </conflict>
</comment>
<comment type="sequence caution" evidence="4">
    <conflict type="erroneous gene model prediction">
        <sequence resource="EMBL" id="CR762462"/>
    </conflict>
</comment>
<comment type="sequence caution" evidence="4">
    <conflict type="erroneous gene model prediction">
        <sequence resource="EMBL" id="CU915566"/>
    </conflict>
</comment>
<gene>
    <name evidence="1" type="primary">nsun3</name>
    <name evidence="3" type="ORF">zgc:109983</name>
</gene>
<evidence type="ECO:0000250" key="1">
    <source>
        <dbReference type="UniProtKB" id="Q9H649"/>
    </source>
</evidence>
<evidence type="ECO:0000255" key="2">
    <source>
        <dbReference type="PROSITE-ProRule" id="PRU01023"/>
    </source>
</evidence>
<evidence type="ECO:0000303" key="3">
    <source ref="2"/>
</evidence>
<evidence type="ECO:0000305" key="4"/>
<proteinExistence type="evidence at transcript level"/>
<organism>
    <name type="scientific">Danio rerio</name>
    <name type="common">Zebrafish</name>
    <name type="synonym">Brachydanio rerio</name>
    <dbReference type="NCBI Taxonomy" id="7955"/>
    <lineage>
        <taxon>Eukaryota</taxon>
        <taxon>Metazoa</taxon>
        <taxon>Chordata</taxon>
        <taxon>Craniata</taxon>
        <taxon>Vertebrata</taxon>
        <taxon>Euteleostomi</taxon>
        <taxon>Actinopterygii</taxon>
        <taxon>Neopterygii</taxon>
        <taxon>Teleostei</taxon>
        <taxon>Ostariophysi</taxon>
        <taxon>Cypriniformes</taxon>
        <taxon>Danionidae</taxon>
        <taxon>Danioninae</taxon>
        <taxon>Danio</taxon>
    </lineage>
</organism>
<accession>Q4KMK0</accession>
<accession>F6NJM6</accession>
<accession>Q6DG64</accession>
<feature type="chain" id="PRO_0000289232" description="tRNA (cytosine(34)-C(5))-methyltransferase, mitochondrial">
    <location>
        <begin position="1"/>
        <end position="367"/>
    </location>
</feature>
<feature type="active site" description="Nucleophile" evidence="2">
    <location>
        <position position="296"/>
    </location>
</feature>
<feature type="binding site" evidence="2">
    <location>
        <begin position="170"/>
        <end position="176"/>
    </location>
    <ligand>
        <name>S-adenosyl-L-methionine</name>
        <dbReference type="ChEBI" id="CHEBI:59789"/>
    </ligand>
</feature>
<feature type="binding site" evidence="2">
    <location>
        <position position="193"/>
    </location>
    <ligand>
        <name>S-adenosyl-L-methionine</name>
        <dbReference type="ChEBI" id="CHEBI:59789"/>
    </ligand>
</feature>
<feature type="binding site" evidence="2">
    <location>
        <position position="224"/>
    </location>
    <ligand>
        <name>S-adenosyl-L-methionine</name>
        <dbReference type="ChEBI" id="CHEBI:59789"/>
    </ligand>
</feature>
<feature type="binding site" evidence="2">
    <location>
        <position position="242"/>
    </location>
    <ligand>
        <name>S-adenosyl-L-methionine</name>
        <dbReference type="ChEBI" id="CHEBI:59789"/>
    </ligand>
</feature>
<feature type="sequence conflict" description="In Ref. 2; AAH76487." evidence="4" ref="2">
    <location>
        <position position="30"/>
    </location>
</feature>
<feature type="sequence conflict" description="In Ref. 2; AAH98531." evidence="4" ref="2">
    <original>Y</original>
    <variation>H</variation>
    <location>
        <position position="50"/>
    </location>
</feature>
<feature type="sequence conflict" description="In Ref. 2; AAH98531." evidence="4" ref="2">
    <original>L</original>
    <variation>M</variation>
    <location>
        <position position="322"/>
    </location>
</feature>
<reference key="1">
    <citation type="journal article" date="2013" name="Nature">
        <title>The zebrafish reference genome sequence and its relationship to the human genome.</title>
        <authorList>
            <person name="Howe K."/>
            <person name="Clark M.D."/>
            <person name="Torroja C.F."/>
            <person name="Torrance J."/>
            <person name="Berthelot C."/>
            <person name="Muffato M."/>
            <person name="Collins J.E."/>
            <person name="Humphray S."/>
            <person name="McLaren K."/>
            <person name="Matthews L."/>
            <person name="McLaren S."/>
            <person name="Sealy I."/>
            <person name="Caccamo M."/>
            <person name="Churcher C."/>
            <person name="Scott C."/>
            <person name="Barrett J.C."/>
            <person name="Koch R."/>
            <person name="Rauch G.J."/>
            <person name="White S."/>
            <person name="Chow W."/>
            <person name="Kilian B."/>
            <person name="Quintais L.T."/>
            <person name="Guerra-Assuncao J.A."/>
            <person name="Zhou Y."/>
            <person name="Gu Y."/>
            <person name="Yen J."/>
            <person name="Vogel J.H."/>
            <person name="Eyre T."/>
            <person name="Redmond S."/>
            <person name="Banerjee R."/>
            <person name="Chi J."/>
            <person name="Fu B."/>
            <person name="Langley E."/>
            <person name="Maguire S.F."/>
            <person name="Laird G.K."/>
            <person name="Lloyd D."/>
            <person name="Kenyon E."/>
            <person name="Donaldson S."/>
            <person name="Sehra H."/>
            <person name="Almeida-King J."/>
            <person name="Loveland J."/>
            <person name="Trevanion S."/>
            <person name="Jones M."/>
            <person name="Quail M."/>
            <person name="Willey D."/>
            <person name="Hunt A."/>
            <person name="Burton J."/>
            <person name="Sims S."/>
            <person name="McLay K."/>
            <person name="Plumb B."/>
            <person name="Davis J."/>
            <person name="Clee C."/>
            <person name="Oliver K."/>
            <person name="Clark R."/>
            <person name="Riddle C."/>
            <person name="Elliot D."/>
            <person name="Threadgold G."/>
            <person name="Harden G."/>
            <person name="Ware D."/>
            <person name="Begum S."/>
            <person name="Mortimore B."/>
            <person name="Kerry G."/>
            <person name="Heath P."/>
            <person name="Phillimore B."/>
            <person name="Tracey A."/>
            <person name="Corby N."/>
            <person name="Dunn M."/>
            <person name="Johnson C."/>
            <person name="Wood J."/>
            <person name="Clark S."/>
            <person name="Pelan S."/>
            <person name="Griffiths G."/>
            <person name="Smith M."/>
            <person name="Glithero R."/>
            <person name="Howden P."/>
            <person name="Barker N."/>
            <person name="Lloyd C."/>
            <person name="Stevens C."/>
            <person name="Harley J."/>
            <person name="Holt K."/>
            <person name="Panagiotidis G."/>
            <person name="Lovell J."/>
            <person name="Beasley H."/>
            <person name="Henderson C."/>
            <person name="Gordon D."/>
            <person name="Auger K."/>
            <person name="Wright D."/>
            <person name="Collins J."/>
            <person name="Raisen C."/>
            <person name="Dyer L."/>
            <person name="Leung K."/>
            <person name="Robertson L."/>
            <person name="Ambridge K."/>
            <person name="Leongamornlert D."/>
            <person name="McGuire S."/>
            <person name="Gilderthorp R."/>
            <person name="Griffiths C."/>
            <person name="Manthravadi D."/>
            <person name="Nichol S."/>
            <person name="Barker G."/>
            <person name="Whitehead S."/>
            <person name="Kay M."/>
            <person name="Brown J."/>
            <person name="Murnane C."/>
            <person name="Gray E."/>
            <person name="Humphries M."/>
            <person name="Sycamore N."/>
            <person name="Barker D."/>
            <person name="Saunders D."/>
            <person name="Wallis J."/>
            <person name="Babbage A."/>
            <person name="Hammond S."/>
            <person name="Mashreghi-Mohammadi M."/>
            <person name="Barr L."/>
            <person name="Martin S."/>
            <person name="Wray P."/>
            <person name="Ellington A."/>
            <person name="Matthews N."/>
            <person name="Ellwood M."/>
            <person name="Woodmansey R."/>
            <person name="Clark G."/>
            <person name="Cooper J."/>
            <person name="Tromans A."/>
            <person name="Grafham D."/>
            <person name="Skuce C."/>
            <person name="Pandian R."/>
            <person name="Andrews R."/>
            <person name="Harrison E."/>
            <person name="Kimberley A."/>
            <person name="Garnett J."/>
            <person name="Fosker N."/>
            <person name="Hall R."/>
            <person name="Garner P."/>
            <person name="Kelly D."/>
            <person name="Bird C."/>
            <person name="Palmer S."/>
            <person name="Gehring I."/>
            <person name="Berger A."/>
            <person name="Dooley C.M."/>
            <person name="Ersan-Urun Z."/>
            <person name="Eser C."/>
            <person name="Geiger H."/>
            <person name="Geisler M."/>
            <person name="Karotki L."/>
            <person name="Kirn A."/>
            <person name="Konantz J."/>
            <person name="Konantz M."/>
            <person name="Oberlander M."/>
            <person name="Rudolph-Geiger S."/>
            <person name="Teucke M."/>
            <person name="Lanz C."/>
            <person name="Raddatz G."/>
            <person name="Osoegawa K."/>
            <person name="Zhu B."/>
            <person name="Rapp A."/>
            <person name="Widaa S."/>
            <person name="Langford C."/>
            <person name="Yang F."/>
            <person name="Schuster S.C."/>
            <person name="Carter N.P."/>
            <person name="Harrow J."/>
            <person name="Ning Z."/>
            <person name="Herrero J."/>
            <person name="Searle S.M."/>
            <person name="Enright A."/>
            <person name="Geisler R."/>
            <person name="Plasterk R.H."/>
            <person name="Lee C."/>
            <person name="Westerfield M."/>
            <person name="de Jong P.J."/>
            <person name="Zon L.I."/>
            <person name="Postlethwait J.H."/>
            <person name="Nusslein-Volhard C."/>
            <person name="Hubbard T.J."/>
            <person name="Roest Crollius H."/>
            <person name="Rogers J."/>
            <person name="Stemple D.L."/>
        </authorList>
    </citation>
    <scope>NUCLEOTIDE SEQUENCE [LARGE SCALE GENOMIC DNA]</scope>
    <source>
        <strain>Tuebingen</strain>
    </source>
</reference>
<reference key="2">
    <citation type="submission" date="2005-07" db="EMBL/GenBank/DDBJ databases">
        <authorList>
            <consortium name="NIH - Zebrafish Gene Collection (ZGC) project"/>
        </authorList>
    </citation>
    <scope>NUCLEOTIDE SEQUENCE [LARGE SCALE MRNA]</scope>
    <source>
        <tissue>Eye</tissue>
    </source>
</reference>
<name>NSUN3_DANRE</name>
<protein>
    <recommendedName>
        <fullName evidence="1">tRNA (cytosine(34)-C(5))-methyltransferase, mitochondrial</fullName>
        <ecNumber evidence="1">2.1.1.-</ecNumber>
    </recommendedName>
    <alternativeName>
        <fullName evidence="1">NOL1/NOP2/Sun domain family member 3</fullName>
    </alternativeName>
</protein>
<dbReference type="EC" id="2.1.1.-" evidence="1"/>
<dbReference type="EMBL" id="CR762462">
    <property type="status" value="NOT_ANNOTATED_CDS"/>
    <property type="molecule type" value="Genomic_DNA"/>
</dbReference>
<dbReference type="EMBL" id="CU915566">
    <property type="status" value="NOT_ANNOTATED_CDS"/>
    <property type="molecule type" value="Genomic_DNA"/>
</dbReference>
<dbReference type="EMBL" id="BC076487">
    <property type="protein sequence ID" value="AAH76487.1"/>
    <property type="status" value="ALT_INIT"/>
    <property type="molecule type" value="mRNA"/>
</dbReference>
<dbReference type="EMBL" id="BC098531">
    <property type="protein sequence ID" value="AAH98531.1"/>
    <property type="molecule type" value="mRNA"/>
</dbReference>
<dbReference type="RefSeq" id="NP_001020473.1">
    <property type="nucleotide sequence ID" value="NM_001025302.1"/>
</dbReference>
<dbReference type="SMR" id="Q4KMK0"/>
<dbReference type="FunCoup" id="Q4KMK0">
    <property type="interactions" value="80"/>
</dbReference>
<dbReference type="STRING" id="7955.ENSDARP00000118143"/>
<dbReference type="PaxDb" id="7955-ENSDARP00000118143"/>
<dbReference type="GeneID" id="553534"/>
<dbReference type="KEGG" id="dre:553534"/>
<dbReference type="AGR" id="ZFIN:ZDB-GENE-050706-95"/>
<dbReference type="CTD" id="63899"/>
<dbReference type="ZFIN" id="ZDB-GENE-050706-95">
    <property type="gene designation" value="nsun3"/>
</dbReference>
<dbReference type="eggNOG" id="KOG2198">
    <property type="taxonomic scope" value="Eukaryota"/>
</dbReference>
<dbReference type="InParanoid" id="Q4KMK0"/>
<dbReference type="OrthoDB" id="8020218at2759"/>
<dbReference type="PhylomeDB" id="Q4KMK0"/>
<dbReference type="TreeFam" id="TF321304"/>
<dbReference type="PRO" id="PR:Q4KMK0"/>
<dbReference type="Proteomes" id="UP000000437">
    <property type="component" value="Chromosome 1"/>
</dbReference>
<dbReference type="GO" id="GO:0005762">
    <property type="term" value="C:mitochondrial large ribosomal subunit"/>
    <property type="evidence" value="ECO:0000318"/>
    <property type="project" value="GO_Central"/>
</dbReference>
<dbReference type="GO" id="GO:0005759">
    <property type="term" value="C:mitochondrial matrix"/>
    <property type="evidence" value="ECO:0000250"/>
    <property type="project" value="UniProtKB"/>
</dbReference>
<dbReference type="GO" id="GO:0005739">
    <property type="term" value="C:mitochondrion"/>
    <property type="evidence" value="ECO:0000250"/>
    <property type="project" value="UniProtKB"/>
</dbReference>
<dbReference type="GO" id="GO:0008168">
    <property type="term" value="F:methyltransferase activity"/>
    <property type="evidence" value="ECO:0000318"/>
    <property type="project" value="GO_Central"/>
</dbReference>
<dbReference type="GO" id="GO:0016428">
    <property type="term" value="F:tRNA (cytidine-5-)-methyltransferase activity"/>
    <property type="evidence" value="ECO:0000250"/>
    <property type="project" value="UniProtKB"/>
</dbReference>
<dbReference type="GO" id="GO:0000049">
    <property type="term" value="F:tRNA binding"/>
    <property type="evidence" value="ECO:0007669"/>
    <property type="project" value="UniProtKB-KW"/>
</dbReference>
<dbReference type="GO" id="GO:0070129">
    <property type="term" value="P:regulation of mitochondrial translation"/>
    <property type="evidence" value="ECO:0000250"/>
    <property type="project" value="UniProtKB"/>
</dbReference>
<dbReference type="GO" id="GO:0031167">
    <property type="term" value="P:rRNA methylation"/>
    <property type="evidence" value="ECO:0000318"/>
    <property type="project" value="GO_Central"/>
</dbReference>
<dbReference type="GO" id="GO:0002127">
    <property type="term" value="P:tRNA wobble base cytosine methylation"/>
    <property type="evidence" value="ECO:0000250"/>
    <property type="project" value="UniProtKB"/>
</dbReference>
<dbReference type="FunFam" id="3.40.50.150:FF:000055">
    <property type="entry name" value="5-methylcytosine rRNA methyltransferase NSUN4"/>
    <property type="match status" value="1"/>
</dbReference>
<dbReference type="Gene3D" id="6.20.240.40">
    <property type="match status" value="1"/>
</dbReference>
<dbReference type="Gene3D" id="3.40.50.150">
    <property type="entry name" value="Vaccinia Virus protein VP39"/>
    <property type="match status" value="1"/>
</dbReference>
<dbReference type="InterPro" id="IPR049560">
    <property type="entry name" value="MeTrfase_RsmB-F_NOP2_cat"/>
</dbReference>
<dbReference type="InterPro" id="IPR001678">
    <property type="entry name" value="MeTrfase_RsmB-F_NOP2_dom"/>
</dbReference>
<dbReference type="InterPro" id="IPR023267">
    <property type="entry name" value="RCMT"/>
</dbReference>
<dbReference type="InterPro" id="IPR029063">
    <property type="entry name" value="SAM-dependent_MTases_sf"/>
</dbReference>
<dbReference type="PANTHER" id="PTHR22808">
    <property type="entry name" value="NCL1 YEAST -RELATED NOL1/NOP2/FMU SUN DOMAIN-CONTAINING"/>
    <property type="match status" value="1"/>
</dbReference>
<dbReference type="PANTHER" id="PTHR22808:SF8">
    <property type="entry name" value="TRNA (CYTOSINE(34)-C(5))-METHYLTRANSFERASE, MITOCHONDRIAL"/>
    <property type="match status" value="1"/>
</dbReference>
<dbReference type="Pfam" id="PF01189">
    <property type="entry name" value="Methyltr_RsmB-F"/>
    <property type="match status" value="1"/>
</dbReference>
<dbReference type="PRINTS" id="PR02008">
    <property type="entry name" value="RCMTFAMILY"/>
</dbReference>
<dbReference type="SUPFAM" id="SSF53335">
    <property type="entry name" value="S-adenosyl-L-methionine-dependent methyltransferases"/>
    <property type="match status" value="1"/>
</dbReference>
<dbReference type="PROSITE" id="PS51686">
    <property type="entry name" value="SAM_MT_RSMB_NOP"/>
    <property type="match status" value="1"/>
</dbReference>
<keyword id="KW-0489">Methyltransferase</keyword>
<keyword id="KW-0496">Mitochondrion</keyword>
<keyword id="KW-1185">Reference proteome</keyword>
<keyword id="KW-0694">RNA-binding</keyword>
<keyword id="KW-0949">S-adenosyl-L-methionine</keyword>
<keyword id="KW-0808">Transferase</keyword>
<keyword id="KW-0820">tRNA-binding</keyword>